<accession>B1XSA5</accession>
<protein>
    <recommendedName>
        <fullName evidence="1">Octanoyltransferase</fullName>
        <ecNumber evidence="1">2.3.1.181</ecNumber>
    </recommendedName>
    <alternativeName>
        <fullName evidence="1">Lipoate-protein ligase B</fullName>
    </alternativeName>
    <alternativeName>
        <fullName evidence="1">Lipoyl/octanoyl transferase</fullName>
    </alternativeName>
    <alternativeName>
        <fullName evidence="1">Octanoyl-[acyl-carrier-protein]-protein N-octanoyltransferase</fullName>
    </alternativeName>
</protein>
<name>LIPB_POLNS</name>
<reference key="1">
    <citation type="journal article" date="2013" name="Proc. Natl. Acad. Sci. U.S.A.">
        <title>Polynucleobacter necessarius, a model for genome reduction in both free-living and symbiotic bacteria.</title>
        <authorList>
            <person name="Boscaro V."/>
            <person name="Felletti M."/>
            <person name="Vannini C."/>
            <person name="Ackerman M.S."/>
            <person name="Chain P.S."/>
            <person name="Malfatti S."/>
            <person name="Vergez L.M."/>
            <person name="Shin M."/>
            <person name="Doak T.G."/>
            <person name="Lynch M."/>
            <person name="Petroni G."/>
        </authorList>
    </citation>
    <scope>NUCLEOTIDE SEQUENCE [LARGE SCALE GENOMIC DNA]</scope>
    <source>
        <strain>STIR1</strain>
    </source>
</reference>
<evidence type="ECO:0000255" key="1">
    <source>
        <dbReference type="HAMAP-Rule" id="MF_00013"/>
    </source>
</evidence>
<evidence type="ECO:0000255" key="2">
    <source>
        <dbReference type="PROSITE-ProRule" id="PRU01067"/>
    </source>
</evidence>
<comment type="function">
    <text evidence="1">Catalyzes the transfer of endogenously produced octanoic acid from octanoyl-acyl-carrier-protein onto the lipoyl domains of lipoate-dependent enzymes. Lipoyl-ACP can also act as a substrate although octanoyl-ACP is likely to be the physiological substrate.</text>
</comment>
<comment type="catalytic activity">
    <reaction evidence="1">
        <text>octanoyl-[ACP] + L-lysyl-[protein] = N(6)-octanoyl-L-lysyl-[protein] + holo-[ACP] + H(+)</text>
        <dbReference type="Rhea" id="RHEA:17665"/>
        <dbReference type="Rhea" id="RHEA-COMP:9636"/>
        <dbReference type="Rhea" id="RHEA-COMP:9685"/>
        <dbReference type="Rhea" id="RHEA-COMP:9752"/>
        <dbReference type="Rhea" id="RHEA-COMP:9928"/>
        <dbReference type="ChEBI" id="CHEBI:15378"/>
        <dbReference type="ChEBI" id="CHEBI:29969"/>
        <dbReference type="ChEBI" id="CHEBI:64479"/>
        <dbReference type="ChEBI" id="CHEBI:78463"/>
        <dbReference type="ChEBI" id="CHEBI:78809"/>
        <dbReference type="EC" id="2.3.1.181"/>
    </reaction>
</comment>
<comment type="pathway">
    <text evidence="1">Protein modification; protein lipoylation via endogenous pathway; protein N(6)-(lipoyl)lysine from octanoyl-[acyl-carrier-protein]: step 1/2.</text>
</comment>
<comment type="subcellular location">
    <subcellularLocation>
        <location evidence="1">Cytoplasm</location>
    </subcellularLocation>
</comment>
<comment type="miscellaneous">
    <text evidence="1">In the reaction, the free carboxyl group of octanoic acid is attached via an amide linkage to the epsilon-amino group of a specific lysine residue of lipoyl domains of lipoate-dependent enzymes.</text>
</comment>
<comment type="similarity">
    <text evidence="1">Belongs to the LipB family.</text>
</comment>
<dbReference type="EC" id="2.3.1.181" evidence="1"/>
<dbReference type="EMBL" id="CP001010">
    <property type="protein sequence ID" value="ACB44740.1"/>
    <property type="molecule type" value="Genomic_DNA"/>
</dbReference>
<dbReference type="SMR" id="B1XSA5"/>
<dbReference type="STRING" id="452638.Pnec_1669"/>
<dbReference type="KEGG" id="pne:Pnec_1669"/>
<dbReference type="eggNOG" id="COG0321">
    <property type="taxonomic scope" value="Bacteria"/>
</dbReference>
<dbReference type="HOGENOM" id="CLU_035168_3_1_4"/>
<dbReference type="OrthoDB" id="9787061at2"/>
<dbReference type="UniPathway" id="UPA00538">
    <property type="reaction ID" value="UER00592"/>
</dbReference>
<dbReference type="GO" id="GO:0005737">
    <property type="term" value="C:cytoplasm"/>
    <property type="evidence" value="ECO:0007669"/>
    <property type="project" value="UniProtKB-SubCell"/>
</dbReference>
<dbReference type="GO" id="GO:0033819">
    <property type="term" value="F:lipoyl(octanoyl) transferase activity"/>
    <property type="evidence" value="ECO:0007669"/>
    <property type="project" value="UniProtKB-EC"/>
</dbReference>
<dbReference type="GO" id="GO:0036211">
    <property type="term" value="P:protein modification process"/>
    <property type="evidence" value="ECO:0007669"/>
    <property type="project" value="InterPro"/>
</dbReference>
<dbReference type="CDD" id="cd16444">
    <property type="entry name" value="LipB"/>
    <property type="match status" value="1"/>
</dbReference>
<dbReference type="FunFam" id="3.30.930.10:FF:000020">
    <property type="entry name" value="Octanoyltransferase"/>
    <property type="match status" value="1"/>
</dbReference>
<dbReference type="Gene3D" id="3.30.930.10">
    <property type="entry name" value="Bira Bifunctional Protein, Domain 2"/>
    <property type="match status" value="1"/>
</dbReference>
<dbReference type="HAMAP" id="MF_00013">
    <property type="entry name" value="LipB"/>
    <property type="match status" value="1"/>
</dbReference>
<dbReference type="InterPro" id="IPR045864">
    <property type="entry name" value="aa-tRNA-synth_II/BPL/LPL"/>
</dbReference>
<dbReference type="InterPro" id="IPR004143">
    <property type="entry name" value="BPL_LPL_catalytic"/>
</dbReference>
<dbReference type="InterPro" id="IPR000544">
    <property type="entry name" value="Octanoyltransferase"/>
</dbReference>
<dbReference type="InterPro" id="IPR020605">
    <property type="entry name" value="Octanoyltransferase_CS"/>
</dbReference>
<dbReference type="NCBIfam" id="TIGR00214">
    <property type="entry name" value="lipB"/>
    <property type="match status" value="1"/>
</dbReference>
<dbReference type="NCBIfam" id="NF010922">
    <property type="entry name" value="PRK14342.1"/>
    <property type="match status" value="1"/>
</dbReference>
<dbReference type="NCBIfam" id="NF010923">
    <property type="entry name" value="PRK14343.1"/>
    <property type="match status" value="1"/>
</dbReference>
<dbReference type="PANTHER" id="PTHR10993:SF7">
    <property type="entry name" value="LIPOYLTRANSFERASE 2, MITOCHONDRIAL-RELATED"/>
    <property type="match status" value="1"/>
</dbReference>
<dbReference type="PANTHER" id="PTHR10993">
    <property type="entry name" value="OCTANOYLTRANSFERASE"/>
    <property type="match status" value="1"/>
</dbReference>
<dbReference type="Pfam" id="PF21948">
    <property type="entry name" value="LplA-B_cat"/>
    <property type="match status" value="1"/>
</dbReference>
<dbReference type="PIRSF" id="PIRSF016262">
    <property type="entry name" value="LPLase"/>
    <property type="match status" value="1"/>
</dbReference>
<dbReference type="SUPFAM" id="SSF55681">
    <property type="entry name" value="Class II aaRS and biotin synthetases"/>
    <property type="match status" value="1"/>
</dbReference>
<dbReference type="PROSITE" id="PS51733">
    <property type="entry name" value="BPL_LPL_CATALYTIC"/>
    <property type="match status" value="1"/>
</dbReference>
<dbReference type="PROSITE" id="PS01313">
    <property type="entry name" value="LIPB"/>
    <property type="match status" value="1"/>
</dbReference>
<proteinExistence type="inferred from homology"/>
<organism>
    <name type="scientific">Polynucleobacter necessarius subsp. necessarius (strain STIR1)</name>
    <dbReference type="NCBI Taxonomy" id="452638"/>
    <lineage>
        <taxon>Bacteria</taxon>
        <taxon>Pseudomonadati</taxon>
        <taxon>Pseudomonadota</taxon>
        <taxon>Betaproteobacteria</taxon>
        <taxon>Burkholderiales</taxon>
        <taxon>Burkholderiaceae</taxon>
        <taxon>Polynucleobacter</taxon>
    </lineage>
</organism>
<sequence length="214" mass="23373">MAALVKQLGLADYASTYEAMQAFTKARTSETLDEIWVLEHPPVFTLGLAGDAGNLHSPSNQISLVQVDRGGEITYHGPGQIVVYLLLDLRRLGIFVKELVSRIEQAVIDTLADFGVQAERHPGAPGIYVSQQSRVPPEWVGAKIAALGLKVSKSCSYHGLALNVATDLEAFKRIHPCGYEGLKTVDMQTLGIKDNMDTISLRLLQHLQKQLIPS</sequence>
<keyword id="KW-0012">Acyltransferase</keyword>
<keyword id="KW-0963">Cytoplasm</keyword>
<keyword id="KW-0808">Transferase</keyword>
<gene>
    <name evidence="1" type="primary">lipB</name>
    <name type="ordered locus">Pnec_1669</name>
</gene>
<feature type="chain" id="PRO_1000089469" description="Octanoyltransferase">
    <location>
        <begin position="1"/>
        <end position="214"/>
    </location>
</feature>
<feature type="domain" description="BPL/LPL catalytic" evidence="2">
    <location>
        <begin position="29"/>
        <end position="214"/>
    </location>
</feature>
<feature type="active site" description="Acyl-thioester intermediate" evidence="1">
    <location>
        <position position="177"/>
    </location>
</feature>
<feature type="binding site" evidence="1">
    <location>
        <begin position="69"/>
        <end position="76"/>
    </location>
    <ligand>
        <name>substrate</name>
    </ligand>
</feature>
<feature type="binding site" evidence="1">
    <location>
        <begin position="146"/>
        <end position="148"/>
    </location>
    <ligand>
        <name>substrate</name>
    </ligand>
</feature>
<feature type="binding site" evidence="1">
    <location>
        <begin position="159"/>
        <end position="161"/>
    </location>
    <ligand>
        <name>substrate</name>
    </ligand>
</feature>
<feature type="site" description="Lowers pKa of active site Cys" evidence="1">
    <location>
        <position position="143"/>
    </location>
</feature>